<sequence length="329" mass="34985">MAQSTLYSRVLGTGSYLPPDRVTNQQLADRLAKEGIETSDEWIVARTGIHARHFAAPDVTTSDLAYQAARRAIEAADIDPQSIDLIIVATSTPDFVFPSTACLLQNKLGIKSGGAAFDVQAVCSGFAYAMAMADSFIRGGQHRTALVVGAETFSRILDFKDRTTCVLFGDGAGAVILSASEEPGVLGSALHADGSYSNILCTPGNVNRGVIEGSAFLHMDGQAVFKLAVNVLEKVAVEALAKANLAPEQIDWLIPHQANIRIMTSTCRKLGLPQERMVVTVDQHGNTSAASIPMALDVAVRDGRIQRGQHVLIEGVGGGFTWGASVFRF</sequence>
<protein>
    <recommendedName>
        <fullName evidence="1">Beta-ketoacyl-[acyl-carrier-protein] synthase III</fullName>
        <shortName evidence="1">Beta-ketoacyl-ACP synthase III</shortName>
        <shortName evidence="1">KAS III</shortName>
        <ecNumber evidence="1">2.3.1.180</ecNumber>
    </recommendedName>
    <alternativeName>
        <fullName evidence="1">3-oxoacyl-[acyl-carrier-protein] synthase 3</fullName>
    </alternativeName>
    <alternativeName>
        <fullName evidence="1">3-oxoacyl-[acyl-carrier-protein] synthase III</fullName>
    </alternativeName>
</protein>
<proteinExistence type="inferred from homology"/>
<name>FABH_BURVG</name>
<organism>
    <name type="scientific">Burkholderia vietnamiensis (strain G4 / LMG 22486)</name>
    <name type="common">Burkholderia cepacia (strain R1808)</name>
    <dbReference type="NCBI Taxonomy" id="269482"/>
    <lineage>
        <taxon>Bacteria</taxon>
        <taxon>Pseudomonadati</taxon>
        <taxon>Pseudomonadota</taxon>
        <taxon>Betaproteobacteria</taxon>
        <taxon>Burkholderiales</taxon>
        <taxon>Burkholderiaceae</taxon>
        <taxon>Burkholderia</taxon>
        <taxon>Burkholderia cepacia complex</taxon>
    </lineage>
</organism>
<keyword id="KW-0012">Acyltransferase</keyword>
<keyword id="KW-0963">Cytoplasm</keyword>
<keyword id="KW-0275">Fatty acid biosynthesis</keyword>
<keyword id="KW-0276">Fatty acid metabolism</keyword>
<keyword id="KW-0444">Lipid biosynthesis</keyword>
<keyword id="KW-0443">Lipid metabolism</keyword>
<keyword id="KW-0511">Multifunctional enzyme</keyword>
<keyword id="KW-0808">Transferase</keyword>
<dbReference type="EC" id="2.3.1.180" evidence="1"/>
<dbReference type="EMBL" id="CP000614">
    <property type="protein sequence ID" value="ABO54051.1"/>
    <property type="molecule type" value="Genomic_DNA"/>
</dbReference>
<dbReference type="SMR" id="A4JCP8"/>
<dbReference type="KEGG" id="bvi:Bcep1808_1040"/>
<dbReference type="eggNOG" id="COG0332">
    <property type="taxonomic scope" value="Bacteria"/>
</dbReference>
<dbReference type="HOGENOM" id="CLU_039592_3_1_4"/>
<dbReference type="UniPathway" id="UPA00094"/>
<dbReference type="Proteomes" id="UP000002287">
    <property type="component" value="Chromosome 1"/>
</dbReference>
<dbReference type="GO" id="GO:0005737">
    <property type="term" value="C:cytoplasm"/>
    <property type="evidence" value="ECO:0007669"/>
    <property type="project" value="UniProtKB-SubCell"/>
</dbReference>
<dbReference type="GO" id="GO:0004315">
    <property type="term" value="F:3-oxoacyl-[acyl-carrier-protein] synthase activity"/>
    <property type="evidence" value="ECO:0007669"/>
    <property type="project" value="InterPro"/>
</dbReference>
<dbReference type="GO" id="GO:0033818">
    <property type="term" value="F:beta-ketoacyl-acyl-carrier-protein synthase III activity"/>
    <property type="evidence" value="ECO:0007669"/>
    <property type="project" value="UniProtKB-UniRule"/>
</dbReference>
<dbReference type="GO" id="GO:0006633">
    <property type="term" value="P:fatty acid biosynthetic process"/>
    <property type="evidence" value="ECO:0007669"/>
    <property type="project" value="UniProtKB-UniRule"/>
</dbReference>
<dbReference type="GO" id="GO:0044550">
    <property type="term" value="P:secondary metabolite biosynthetic process"/>
    <property type="evidence" value="ECO:0007669"/>
    <property type="project" value="TreeGrafter"/>
</dbReference>
<dbReference type="CDD" id="cd00830">
    <property type="entry name" value="KAS_III"/>
    <property type="match status" value="1"/>
</dbReference>
<dbReference type="FunFam" id="3.40.47.10:FF:000004">
    <property type="entry name" value="3-oxoacyl-[acyl-carrier-protein] synthase 3"/>
    <property type="match status" value="1"/>
</dbReference>
<dbReference type="Gene3D" id="3.40.47.10">
    <property type="match status" value="2"/>
</dbReference>
<dbReference type="HAMAP" id="MF_01815">
    <property type="entry name" value="FabH"/>
    <property type="match status" value="1"/>
</dbReference>
<dbReference type="InterPro" id="IPR013747">
    <property type="entry name" value="ACP_syn_III_C"/>
</dbReference>
<dbReference type="InterPro" id="IPR013751">
    <property type="entry name" value="ACP_syn_III_N"/>
</dbReference>
<dbReference type="InterPro" id="IPR004655">
    <property type="entry name" value="FabH"/>
</dbReference>
<dbReference type="InterPro" id="IPR016039">
    <property type="entry name" value="Thiolase-like"/>
</dbReference>
<dbReference type="NCBIfam" id="TIGR00747">
    <property type="entry name" value="fabH"/>
    <property type="match status" value="1"/>
</dbReference>
<dbReference type="NCBIfam" id="NF006829">
    <property type="entry name" value="PRK09352.1"/>
    <property type="match status" value="1"/>
</dbReference>
<dbReference type="PANTHER" id="PTHR34069">
    <property type="entry name" value="3-OXOACYL-[ACYL-CARRIER-PROTEIN] SYNTHASE 3"/>
    <property type="match status" value="1"/>
</dbReference>
<dbReference type="PANTHER" id="PTHR34069:SF2">
    <property type="entry name" value="BETA-KETOACYL-[ACYL-CARRIER-PROTEIN] SYNTHASE III"/>
    <property type="match status" value="1"/>
</dbReference>
<dbReference type="Pfam" id="PF08545">
    <property type="entry name" value="ACP_syn_III"/>
    <property type="match status" value="1"/>
</dbReference>
<dbReference type="Pfam" id="PF08541">
    <property type="entry name" value="ACP_syn_III_C"/>
    <property type="match status" value="1"/>
</dbReference>
<dbReference type="SUPFAM" id="SSF53901">
    <property type="entry name" value="Thiolase-like"/>
    <property type="match status" value="1"/>
</dbReference>
<evidence type="ECO:0000255" key="1">
    <source>
        <dbReference type="HAMAP-Rule" id="MF_01815"/>
    </source>
</evidence>
<gene>
    <name evidence="1" type="primary">fabH</name>
    <name type="ordered locus">Bcep1808_1040</name>
</gene>
<accession>A4JCP8</accession>
<reference key="1">
    <citation type="submission" date="2007-03" db="EMBL/GenBank/DDBJ databases">
        <title>Complete sequence of chromosome 1 of Burkholderia vietnamiensis G4.</title>
        <authorList>
            <consortium name="US DOE Joint Genome Institute"/>
            <person name="Copeland A."/>
            <person name="Lucas S."/>
            <person name="Lapidus A."/>
            <person name="Barry K."/>
            <person name="Detter J.C."/>
            <person name="Glavina del Rio T."/>
            <person name="Hammon N."/>
            <person name="Israni S."/>
            <person name="Dalin E."/>
            <person name="Tice H."/>
            <person name="Pitluck S."/>
            <person name="Chain P."/>
            <person name="Malfatti S."/>
            <person name="Shin M."/>
            <person name="Vergez L."/>
            <person name="Schmutz J."/>
            <person name="Larimer F."/>
            <person name="Land M."/>
            <person name="Hauser L."/>
            <person name="Kyrpides N."/>
            <person name="Tiedje J."/>
            <person name="Richardson P."/>
        </authorList>
    </citation>
    <scope>NUCLEOTIDE SEQUENCE [LARGE SCALE GENOMIC DNA]</scope>
    <source>
        <strain>G4 / LMG 22486</strain>
    </source>
</reference>
<comment type="function">
    <text evidence="1">Catalyzes the condensation reaction of fatty acid synthesis by the addition to an acyl acceptor of two carbons from malonyl-ACP. Catalyzes the first condensation reaction which initiates fatty acid synthesis and may therefore play a role in governing the total rate of fatty acid production. Possesses both acetoacetyl-ACP synthase and acetyl transacylase activities. Its substrate specificity determines the biosynthesis of branched-chain and/or straight-chain of fatty acids.</text>
</comment>
<comment type="catalytic activity">
    <reaction evidence="1">
        <text>malonyl-[ACP] + acetyl-CoA + H(+) = 3-oxobutanoyl-[ACP] + CO2 + CoA</text>
        <dbReference type="Rhea" id="RHEA:12080"/>
        <dbReference type="Rhea" id="RHEA-COMP:9623"/>
        <dbReference type="Rhea" id="RHEA-COMP:9625"/>
        <dbReference type="ChEBI" id="CHEBI:15378"/>
        <dbReference type="ChEBI" id="CHEBI:16526"/>
        <dbReference type="ChEBI" id="CHEBI:57287"/>
        <dbReference type="ChEBI" id="CHEBI:57288"/>
        <dbReference type="ChEBI" id="CHEBI:78449"/>
        <dbReference type="ChEBI" id="CHEBI:78450"/>
        <dbReference type="EC" id="2.3.1.180"/>
    </reaction>
</comment>
<comment type="pathway">
    <text evidence="1">Lipid metabolism; fatty acid biosynthesis.</text>
</comment>
<comment type="subunit">
    <text evidence="1">Homodimer.</text>
</comment>
<comment type="subcellular location">
    <subcellularLocation>
        <location evidence="1">Cytoplasm</location>
    </subcellularLocation>
</comment>
<comment type="domain">
    <text evidence="1">The last Arg residue of the ACP-binding site is essential for the weak association between ACP/AcpP and FabH.</text>
</comment>
<comment type="similarity">
    <text evidence="1">Belongs to the thiolase-like superfamily. FabH family.</text>
</comment>
<feature type="chain" id="PRO_1000070227" description="Beta-ketoacyl-[acyl-carrier-protein] synthase III">
    <location>
        <begin position="1"/>
        <end position="329"/>
    </location>
</feature>
<feature type="region of interest" description="ACP-binding" evidence="1">
    <location>
        <begin position="257"/>
        <end position="261"/>
    </location>
</feature>
<feature type="active site" evidence="1">
    <location>
        <position position="123"/>
    </location>
</feature>
<feature type="active site" evidence="1">
    <location>
        <position position="256"/>
    </location>
</feature>
<feature type="active site" evidence="1">
    <location>
        <position position="286"/>
    </location>
</feature>